<gene>
    <name type="ordered locus">MJ1519</name>
</gene>
<protein>
    <recommendedName>
        <fullName>Uncharacterized protein MJ1519</fullName>
    </recommendedName>
</protein>
<organism>
    <name type="scientific">Methanocaldococcus jannaschii (strain ATCC 43067 / DSM 2661 / JAL-1 / JCM 10045 / NBRC 100440)</name>
    <name type="common">Methanococcus jannaschii</name>
    <dbReference type="NCBI Taxonomy" id="243232"/>
    <lineage>
        <taxon>Archaea</taxon>
        <taxon>Methanobacteriati</taxon>
        <taxon>Methanobacteriota</taxon>
        <taxon>Methanomada group</taxon>
        <taxon>Methanococci</taxon>
        <taxon>Methanococcales</taxon>
        <taxon>Methanocaldococcaceae</taxon>
        <taxon>Methanocaldococcus</taxon>
    </lineage>
</organism>
<dbReference type="EMBL" id="L77117">
    <property type="protein sequence ID" value="AAB99538.1"/>
    <property type="molecule type" value="Genomic_DNA"/>
</dbReference>
<dbReference type="PIR" id="F64489">
    <property type="entry name" value="F64489"/>
</dbReference>
<dbReference type="RefSeq" id="WP_010871043.1">
    <property type="nucleotide sequence ID" value="NC_000909.1"/>
</dbReference>
<dbReference type="FunCoup" id="Q58914">
    <property type="interactions" value="3"/>
</dbReference>
<dbReference type="STRING" id="243232.MJ_1519"/>
<dbReference type="PaxDb" id="243232-MJ_1519"/>
<dbReference type="EnsemblBacteria" id="AAB99538">
    <property type="protein sequence ID" value="AAB99538"/>
    <property type="gene ID" value="MJ_1519"/>
</dbReference>
<dbReference type="GeneID" id="1452427"/>
<dbReference type="KEGG" id="mja:MJ_1519"/>
<dbReference type="eggNOG" id="arCOG00558">
    <property type="taxonomic scope" value="Archaea"/>
</dbReference>
<dbReference type="HOGENOM" id="CLU_006651_0_0_2"/>
<dbReference type="InParanoid" id="Q58914"/>
<dbReference type="OrthoDB" id="45637at2157"/>
<dbReference type="PhylomeDB" id="Q58914"/>
<dbReference type="Proteomes" id="UP000000805">
    <property type="component" value="Chromosome"/>
</dbReference>
<dbReference type="GO" id="GO:0005524">
    <property type="term" value="F:ATP binding"/>
    <property type="evidence" value="ECO:0007669"/>
    <property type="project" value="UniProtKB-KW"/>
</dbReference>
<dbReference type="GO" id="GO:0003678">
    <property type="term" value="F:DNA helicase activity"/>
    <property type="evidence" value="ECO:0007669"/>
    <property type="project" value="UniProtKB-ARBA"/>
</dbReference>
<dbReference type="CDD" id="cd17933">
    <property type="entry name" value="DEXSc_RecD-like"/>
    <property type="match status" value="1"/>
</dbReference>
<dbReference type="CDD" id="cd18809">
    <property type="entry name" value="SF1_C_RecD"/>
    <property type="match status" value="1"/>
</dbReference>
<dbReference type="Gene3D" id="2.30.30.940">
    <property type="match status" value="1"/>
</dbReference>
<dbReference type="Gene3D" id="3.40.50.300">
    <property type="entry name" value="P-loop containing nucleotide triphosphate hydrolases"/>
    <property type="match status" value="2"/>
</dbReference>
<dbReference type="InterPro" id="IPR050534">
    <property type="entry name" value="Coronavir_polyprotein_1ab"/>
</dbReference>
<dbReference type="InterPro" id="IPR027417">
    <property type="entry name" value="P-loop_NTPase"/>
</dbReference>
<dbReference type="InterPro" id="IPR029493">
    <property type="entry name" value="RecD2-like_HHH"/>
</dbReference>
<dbReference type="InterPro" id="IPR027785">
    <property type="entry name" value="UvrD-like_helicase_C"/>
</dbReference>
<dbReference type="PANTHER" id="PTHR43788:SF6">
    <property type="entry name" value="DNA HELICASE B"/>
    <property type="match status" value="1"/>
</dbReference>
<dbReference type="PANTHER" id="PTHR43788">
    <property type="entry name" value="DNA2/NAM7 HELICASE FAMILY MEMBER"/>
    <property type="match status" value="1"/>
</dbReference>
<dbReference type="Pfam" id="PF13245">
    <property type="entry name" value="AAA_19"/>
    <property type="match status" value="1"/>
</dbReference>
<dbReference type="Pfam" id="PF14490">
    <property type="entry name" value="HHH_RecD2"/>
    <property type="match status" value="1"/>
</dbReference>
<dbReference type="Pfam" id="PF13538">
    <property type="entry name" value="UvrD_C_2"/>
    <property type="match status" value="1"/>
</dbReference>
<dbReference type="SUPFAM" id="SSF52540">
    <property type="entry name" value="P-loop containing nucleoside triphosphate hydrolases"/>
    <property type="match status" value="1"/>
</dbReference>
<reference key="1">
    <citation type="journal article" date="1996" name="Science">
        <title>Complete genome sequence of the methanogenic archaeon, Methanococcus jannaschii.</title>
        <authorList>
            <person name="Bult C.J."/>
            <person name="White O."/>
            <person name="Olsen G.J."/>
            <person name="Zhou L."/>
            <person name="Fleischmann R.D."/>
            <person name="Sutton G.G."/>
            <person name="Blake J.A."/>
            <person name="FitzGerald L.M."/>
            <person name="Clayton R.A."/>
            <person name="Gocayne J.D."/>
            <person name="Kerlavage A.R."/>
            <person name="Dougherty B.A."/>
            <person name="Tomb J.-F."/>
            <person name="Adams M.D."/>
            <person name="Reich C.I."/>
            <person name="Overbeek R."/>
            <person name="Kirkness E.F."/>
            <person name="Weinstock K.G."/>
            <person name="Merrick J.M."/>
            <person name="Glodek A."/>
            <person name="Scott J.L."/>
            <person name="Geoghagen N.S.M."/>
            <person name="Weidman J.F."/>
            <person name="Fuhrmann J.L."/>
            <person name="Nguyen D."/>
            <person name="Utterback T.R."/>
            <person name="Kelley J.M."/>
            <person name="Peterson J.D."/>
            <person name="Sadow P.W."/>
            <person name="Hanna M.C."/>
            <person name="Cotton M.D."/>
            <person name="Roberts K.M."/>
            <person name="Hurst M.A."/>
            <person name="Kaine B.P."/>
            <person name="Borodovsky M."/>
            <person name="Klenk H.-P."/>
            <person name="Fraser C.M."/>
            <person name="Smith H.O."/>
            <person name="Woese C.R."/>
            <person name="Venter J.C."/>
        </authorList>
    </citation>
    <scope>NUCLEOTIDE SEQUENCE [LARGE SCALE GENOMIC DNA]</scope>
    <source>
        <strain>ATCC 43067 / DSM 2661 / JAL-1 / JCM 10045 / NBRC 100440</strain>
    </source>
</reference>
<name>Y1519_METJA</name>
<keyword id="KW-0067">ATP-binding</keyword>
<keyword id="KW-0547">Nucleotide-binding</keyword>
<keyword id="KW-1185">Reference proteome</keyword>
<accession>Q58914</accession>
<evidence type="ECO:0000255" key="1"/>
<feature type="chain" id="PRO_0000107391" description="Uncharacterized protein MJ1519">
    <location>
        <begin position="1"/>
        <end position="1175"/>
    </location>
</feature>
<feature type="binding site" evidence="1">
    <location>
        <begin position="586"/>
        <end position="593"/>
    </location>
    <ligand>
        <name>ATP</name>
        <dbReference type="ChEBI" id="CHEBI:30616"/>
    </ligand>
</feature>
<proteinExistence type="predicted"/>
<sequence length="1175" mass="138619">MRNLISLIAWHDSGWNGRVCRNPKENKYCESFGYVIRKRKYEFCVNNPDANLGNSRERACSEAIVFCKGKVQEHNIRFPAIFYVDRKNRNEHEIKMIKKEIEEQLRMINGKYAILYVRENPLSENRVIVGCVKIKEIIDGSKDYIRKKQSPNRVGRGIVFDVENDVIFALPYQELLEYCKNKNKEIEEILKEFNLIFEVGDFERYFKGMSNFISDEVAVQILKKGLEIVEEFNKFREENQDFDKYLTDENIAFRPHVMKKFDEFAENIKKVIAELEGSKYKYPGLPGVLYFLGMEDAYSRYIELWKNEGEKGEEKLYNALIESLENRKENLEFGITKKVIDKFIAQKEEFREFLKNYAVYYELSAFKLEKIKEQYEKEFINLDNIIKNPYILVEDLKENDSFERIIFEELDSWERRRLGDKFNPYSPYRVRALLVEILKRHLSSGNTTISTKDLKDFFEKMDKDIVKITFDEFLRIIEEYKDIISEKVEIVKKEVKNNENKEIIELFTLKEIREYEEIIENTINYLLKSKAPNIDLNPLEIREKLRIKNENKKPAGVDNEEYEKALDMQTEAVVNLLKNRVGILTGPAGTGKTTVIKTIMELMKEVLGLNKIYILTPTGKSAMVVNEKLNNLATAKTIHRYIAEEFKDYFEGDNYFILRLDKITGNDKKEIDALIIDESSMVDIETMGRLLGTIKLDNLKYLIFVGDINQLPPVGAGKPFYDIYNYLEKVNPQSICKLEIVLRADSKKIVELSKLFLDIDKEERIKILNEMFKNKETLGDNEIYRIKENIGGIEKEIITIEVVKDGNIKKSLENAIETILKENNTEDFFDFAVFNDKLQILVPTKTKGEFGSYMINLFIKQESKFIPDKYKNKMLENWFFGDGKVADKVIQIRNNYKKWVYDTERRKWVKEHGVFNGMMGFAYTFKKWNKYQKKYENKTIIRFYYPKIEAYTDEKEMEHAYAITIHKSQGSGFENVILIIPKGLNKFVSKEMLYTAITRAKKRLYVIVEEELKNFLETNISDLARRKTNLLENFNISYLVPYIENRQIITINGEKVRSWQECVLANLFHEVGIEYIYELLSEYLKIGVLPDFKLNIKNRTILWEHYGMLENEKYRKRQKEEKEPIYKQNGFEIIKLSEINENTKLGDKVLIISTSEDLKNNSQVLEKLKTLQQIS</sequence>